<proteinExistence type="inferred from homology"/>
<reference key="1">
    <citation type="journal article" date="2004" name="Proc. Natl. Acad. Sci. U.S.A.">
        <title>The louse-borne human pathogen Bartonella quintana is a genomic derivative of the zoonotic agent Bartonella henselae.</title>
        <authorList>
            <person name="Alsmark U.C.M."/>
            <person name="Frank A.C."/>
            <person name="Karlberg E.O."/>
            <person name="Legault B.-A."/>
            <person name="Ardell D.H."/>
            <person name="Canbaeck B."/>
            <person name="Eriksson A.-S."/>
            <person name="Naeslund A.K."/>
            <person name="Handley S.A."/>
            <person name="Huvet M."/>
            <person name="La Scola B."/>
            <person name="Holmberg M."/>
            <person name="Andersson S.G.E."/>
        </authorList>
    </citation>
    <scope>NUCLEOTIDE SEQUENCE [LARGE SCALE GENOMIC DNA]</scope>
    <source>
        <strain>Toulouse</strain>
    </source>
</reference>
<feature type="chain" id="PRO_0000337324" description="Elongation factor Tu 2">
    <location>
        <begin position="1"/>
        <end position="391"/>
    </location>
</feature>
<feature type="domain" description="tr-type G">
    <location>
        <begin position="10"/>
        <end position="201"/>
    </location>
</feature>
<feature type="region of interest" description="G1" evidence="1">
    <location>
        <begin position="19"/>
        <end position="26"/>
    </location>
</feature>
<feature type="region of interest" description="G2" evidence="1">
    <location>
        <begin position="55"/>
        <end position="59"/>
    </location>
</feature>
<feature type="region of interest" description="G3" evidence="1">
    <location>
        <begin position="76"/>
        <end position="79"/>
    </location>
</feature>
<feature type="region of interest" description="G4" evidence="1">
    <location>
        <begin position="131"/>
        <end position="134"/>
    </location>
</feature>
<feature type="region of interest" description="G5" evidence="1">
    <location>
        <begin position="169"/>
        <end position="171"/>
    </location>
</feature>
<feature type="binding site" evidence="2">
    <location>
        <begin position="19"/>
        <end position="26"/>
    </location>
    <ligand>
        <name>GTP</name>
        <dbReference type="ChEBI" id="CHEBI:37565"/>
    </ligand>
</feature>
<feature type="binding site" evidence="2">
    <location>
        <position position="26"/>
    </location>
    <ligand>
        <name>Mg(2+)</name>
        <dbReference type="ChEBI" id="CHEBI:18420"/>
    </ligand>
</feature>
<feature type="binding site" evidence="2">
    <location>
        <begin position="76"/>
        <end position="80"/>
    </location>
    <ligand>
        <name>GTP</name>
        <dbReference type="ChEBI" id="CHEBI:37565"/>
    </ligand>
</feature>
<feature type="binding site" evidence="2">
    <location>
        <begin position="131"/>
        <end position="134"/>
    </location>
    <ligand>
        <name>GTP</name>
        <dbReference type="ChEBI" id="CHEBI:37565"/>
    </ligand>
</feature>
<keyword id="KW-0963">Cytoplasm</keyword>
<keyword id="KW-0251">Elongation factor</keyword>
<keyword id="KW-0342">GTP-binding</keyword>
<keyword id="KW-0378">Hydrolase</keyword>
<keyword id="KW-0460">Magnesium</keyword>
<keyword id="KW-0479">Metal-binding</keyword>
<keyword id="KW-0547">Nucleotide-binding</keyword>
<keyword id="KW-0648">Protein biosynthesis</keyword>
<protein>
    <recommendedName>
        <fullName evidence="2">Elongation factor Tu 2</fullName>
        <shortName evidence="2">EF-Tu 2</shortName>
        <ecNumber evidence="2">3.6.5.3</ecNumber>
    </recommendedName>
</protein>
<organism>
    <name type="scientific">Bartonella quintana (strain Toulouse)</name>
    <name type="common">Rochalimaea quintana</name>
    <dbReference type="NCBI Taxonomy" id="283165"/>
    <lineage>
        <taxon>Bacteria</taxon>
        <taxon>Pseudomonadati</taxon>
        <taxon>Pseudomonadota</taxon>
        <taxon>Alphaproteobacteria</taxon>
        <taxon>Hyphomicrobiales</taxon>
        <taxon>Bartonellaceae</taxon>
        <taxon>Bartonella</taxon>
    </lineage>
</organism>
<name>EFTU2_BARQU</name>
<accession>Q6FZL2</accession>
<dbReference type="EC" id="3.6.5.3" evidence="2"/>
<dbReference type="EMBL" id="BX897700">
    <property type="protein sequence ID" value="CAF26209.1"/>
    <property type="molecule type" value="Genomic_DNA"/>
</dbReference>
<dbReference type="RefSeq" id="WP_011179463.1">
    <property type="nucleotide sequence ID" value="NC_005955.1"/>
</dbReference>
<dbReference type="SMR" id="Q6FZL2"/>
<dbReference type="KEGG" id="bqu:BQ07210"/>
<dbReference type="eggNOG" id="COG0050">
    <property type="taxonomic scope" value="Bacteria"/>
</dbReference>
<dbReference type="HOGENOM" id="CLU_007265_0_0_5"/>
<dbReference type="OrthoDB" id="9803139at2"/>
<dbReference type="Proteomes" id="UP000000597">
    <property type="component" value="Chromosome"/>
</dbReference>
<dbReference type="GO" id="GO:0005829">
    <property type="term" value="C:cytosol"/>
    <property type="evidence" value="ECO:0007669"/>
    <property type="project" value="TreeGrafter"/>
</dbReference>
<dbReference type="GO" id="GO:0005525">
    <property type="term" value="F:GTP binding"/>
    <property type="evidence" value="ECO:0007669"/>
    <property type="project" value="UniProtKB-UniRule"/>
</dbReference>
<dbReference type="GO" id="GO:0003924">
    <property type="term" value="F:GTPase activity"/>
    <property type="evidence" value="ECO:0007669"/>
    <property type="project" value="InterPro"/>
</dbReference>
<dbReference type="GO" id="GO:0097216">
    <property type="term" value="F:guanosine tetraphosphate binding"/>
    <property type="evidence" value="ECO:0007669"/>
    <property type="project" value="UniProtKB-ARBA"/>
</dbReference>
<dbReference type="GO" id="GO:0003746">
    <property type="term" value="F:translation elongation factor activity"/>
    <property type="evidence" value="ECO:0007669"/>
    <property type="project" value="UniProtKB-UniRule"/>
</dbReference>
<dbReference type="CDD" id="cd01884">
    <property type="entry name" value="EF_Tu"/>
    <property type="match status" value="1"/>
</dbReference>
<dbReference type="CDD" id="cd03697">
    <property type="entry name" value="EFTU_II"/>
    <property type="match status" value="1"/>
</dbReference>
<dbReference type="CDD" id="cd03707">
    <property type="entry name" value="EFTU_III"/>
    <property type="match status" value="1"/>
</dbReference>
<dbReference type="FunFam" id="2.40.30.10:FF:000001">
    <property type="entry name" value="Elongation factor Tu"/>
    <property type="match status" value="1"/>
</dbReference>
<dbReference type="FunFam" id="3.40.50.300:FF:000003">
    <property type="entry name" value="Elongation factor Tu"/>
    <property type="match status" value="1"/>
</dbReference>
<dbReference type="Gene3D" id="3.40.50.300">
    <property type="entry name" value="P-loop containing nucleotide triphosphate hydrolases"/>
    <property type="match status" value="1"/>
</dbReference>
<dbReference type="Gene3D" id="2.40.30.10">
    <property type="entry name" value="Translation factors"/>
    <property type="match status" value="2"/>
</dbReference>
<dbReference type="HAMAP" id="MF_00118_B">
    <property type="entry name" value="EF_Tu_B"/>
    <property type="match status" value="1"/>
</dbReference>
<dbReference type="InterPro" id="IPR041709">
    <property type="entry name" value="EF-Tu_GTP-bd"/>
</dbReference>
<dbReference type="InterPro" id="IPR050055">
    <property type="entry name" value="EF-Tu_GTPase"/>
</dbReference>
<dbReference type="InterPro" id="IPR004161">
    <property type="entry name" value="EFTu-like_2"/>
</dbReference>
<dbReference type="InterPro" id="IPR033720">
    <property type="entry name" value="EFTU_2"/>
</dbReference>
<dbReference type="InterPro" id="IPR031157">
    <property type="entry name" value="G_TR_CS"/>
</dbReference>
<dbReference type="InterPro" id="IPR027417">
    <property type="entry name" value="P-loop_NTPase"/>
</dbReference>
<dbReference type="InterPro" id="IPR005225">
    <property type="entry name" value="Small_GTP-bd"/>
</dbReference>
<dbReference type="InterPro" id="IPR000795">
    <property type="entry name" value="T_Tr_GTP-bd_dom"/>
</dbReference>
<dbReference type="InterPro" id="IPR009000">
    <property type="entry name" value="Transl_B-barrel_sf"/>
</dbReference>
<dbReference type="InterPro" id="IPR009001">
    <property type="entry name" value="Transl_elong_EF1A/Init_IF2_C"/>
</dbReference>
<dbReference type="InterPro" id="IPR004541">
    <property type="entry name" value="Transl_elong_EFTu/EF1A_bac/org"/>
</dbReference>
<dbReference type="InterPro" id="IPR004160">
    <property type="entry name" value="Transl_elong_EFTu/EF1A_C"/>
</dbReference>
<dbReference type="NCBIfam" id="TIGR00485">
    <property type="entry name" value="EF-Tu"/>
    <property type="match status" value="1"/>
</dbReference>
<dbReference type="NCBIfam" id="NF000766">
    <property type="entry name" value="PRK00049.1"/>
    <property type="match status" value="1"/>
</dbReference>
<dbReference type="NCBIfam" id="NF009372">
    <property type="entry name" value="PRK12735.1"/>
    <property type="match status" value="1"/>
</dbReference>
<dbReference type="NCBIfam" id="NF009373">
    <property type="entry name" value="PRK12736.1"/>
    <property type="match status" value="1"/>
</dbReference>
<dbReference type="NCBIfam" id="TIGR00231">
    <property type="entry name" value="small_GTP"/>
    <property type="match status" value="1"/>
</dbReference>
<dbReference type="PANTHER" id="PTHR43721:SF22">
    <property type="entry name" value="ELONGATION FACTOR TU, MITOCHONDRIAL"/>
    <property type="match status" value="1"/>
</dbReference>
<dbReference type="PANTHER" id="PTHR43721">
    <property type="entry name" value="ELONGATION FACTOR TU-RELATED"/>
    <property type="match status" value="1"/>
</dbReference>
<dbReference type="Pfam" id="PF00009">
    <property type="entry name" value="GTP_EFTU"/>
    <property type="match status" value="1"/>
</dbReference>
<dbReference type="Pfam" id="PF03144">
    <property type="entry name" value="GTP_EFTU_D2"/>
    <property type="match status" value="1"/>
</dbReference>
<dbReference type="Pfam" id="PF03143">
    <property type="entry name" value="GTP_EFTU_D3"/>
    <property type="match status" value="1"/>
</dbReference>
<dbReference type="PRINTS" id="PR00315">
    <property type="entry name" value="ELONGATNFCT"/>
</dbReference>
<dbReference type="SUPFAM" id="SSF50465">
    <property type="entry name" value="EF-Tu/eEF-1alpha/eIF2-gamma C-terminal domain"/>
    <property type="match status" value="1"/>
</dbReference>
<dbReference type="SUPFAM" id="SSF52540">
    <property type="entry name" value="P-loop containing nucleoside triphosphate hydrolases"/>
    <property type="match status" value="1"/>
</dbReference>
<dbReference type="SUPFAM" id="SSF50447">
    <property type="entry name" value="Translation proteins"/>
    <property type="match status" value="1"/>
</dbReference>
<dbReference type="PROSITE" id="PS00301">
    <property type="entry name" value="G_TR_1"/>
    <property type="match status" value="1"/>
</dbReference>
<dbReference type="PROSITE" id="PS51722">
    <property type="entry name" value="G_TR_2"/>
    <property type="match status" value="1"/>
</dbReference>
<sequence>MAKSKFERTKPHVNIGTIGHVDHGKTSLTAAITKYFGEFKAYDQIDAAPEERARGITISTAHVEYETEKRHYAHVDCPGHADYVKNMITGAAQMDGAILVVSAADGPMPQTREHILLARQVGVPAIVVFLNKVDQVDDAELLELVELEIRELLSKYDFPGDDIPIVKGSALAALEDKDKSIGEDAVRLLMSEVDNYIPTPERPIDQPFLLPIEDVFSISGRGTVVTGRVERGVIKVGEEIEIIGIRPTSKTTVTGVEMFRKLLDQGQAGDNIGALLRGVDREGIERGQVLAKPGSVTPHTRFKAEAYILTKDEGGRHTPFFTNYRPQFYFRTTDVTGIVTLPEGIEMVMPGDNVAMDVSLIVPIAMEEKLRFAIREGGRTVGAGIVSKIIE</sequence>
<gene>
    <name evidence="2" type="primary">tuf2</name>
    <name type="ordered locus">BQ07210</name>
</gene>
<comment type="function">
    <text evidence="2">GTP hydrolase that promotes the GTP-dependent binding of aminoacyl-tRNA to the A-site of ribosomes during protein biosynthesis.</text>
</comment>
<comment type="catalytic activity">
    <reaction evidence="2">
        <text>GTP + H2O = GDP + phosphate + H(+)</text>
        <dbReference type="Rhea" id="RHEA:19669"/>
        <dbReference type="ChEBI" id="CHEBI:15377"/>
        <dbReference type="ChEBI" id="CHEBI:15378"/>
        <dbReference type="ChEBI" id="CHEBI:37565"/>
        <dbReference type="ChEBI" id="CHEBI:43474"/>
        <dbReference type="ChEBI" id="CHEBI:58189"/>
        <dbReference type="EC" id="3.6.5.3"/>
    </reaction>
    <physiologicalReaction direction="left-to-right" evidence="2">
        <dbReference type="Rhea" id="RHEA:19670"/>
    </physiologicalReaction>
</comment>
<comment type="subunit">
    <text evidence="2">Monomer.</text>
</comment>
<comment type="subcellular location">
    <subcellularLocation>
        <location evidence="2">Cytoplasm</location>
    </subcellularLocation>
</comment>
<comment type="similarity">
    <text evidence="2">Belongs to the TRAFAC class translation factor GTPase superfamily. Classic translation factor GTPase family. EF-Tu/EF-1A subfamily.</text>
</comment>
<evidence type="ECO:0000250" key="1"/>
<evidence type="ECO:0000255" key="2">
    <source>
        <dbReference type="HAMAP-Rule" id="MF_00118"/>
    </source>
</evidence>